<organism>
    <name type="scientific">Mannheimia succiniciproducens (strain KCTC 0769BP / MBEL55E)</name>
    <dbReference type="NCBI Taxonomy" id="221988"/>
    <lineage>
        <taxon>Bacteria</taxon>
        <taxon>Pseudomonadati</taxon>
        <taxon>Pseudomonadota</taxon>
        <taxon>Gammaproteobacteria</taxon>
        <taxon>Pasteurellales</taxon>
        <taxon>Pasteurellaceae</taxon>
        <taxon>Basfia</taxon>
    </lineage>
</organism>
<feature type="chain" id="PRO_0000108654" description="Ribosomal RNA small subunit methyltransferase H">
    <location>
        <begin position="1"/>
        <end position="322"/>
    </location>
</feature>
<feature type="binding site" evidence="1">
    <location>
        <begin position="40"/>
        <end position="42"/>
    </location>
    <ligand>
        <name>S-adenosyl-L-methionine</name>
        <dbReference type="ChEBI" id="CHEBI:59789"/>
    </ligand>
</feature>
<feature type="binding site" evidence="1">
    <location>
        <position position="60"/>
    </location>
    <ligand>
        <name>S-adenosyl-L-methionine</name>
        <dbReference type="ChEBI" id="CHEBI:59789"/>
    </ligand>
</feature>
<feature type="binding site" evidence="1">
    <location>
        <position position="84"/>
    </location>
    <ligand>
        <name>S-adenosyl-L-methionine</name>
        <dbReference type="ChEBI" id="CHEBI:59789"/>
    </ligand>
</feature>
<feature type="binding site" evidence="1">
    <location>
        <position position="106"/>
    </location>
    <ligand>
        <name>S-adenosyl-L-methionine</name>
        <dbReference type="ChEBI" id="CHEBI:59789"/>
    </ligand>
</feature>
<feature type="binding site" evidence="1">
    <location>
        <position position="113"/>
    </location>
    <ligand>
        <name>S-adenosyl-L-methionine</name>
        <dbReference type="ChEBI" id="CHEBI:59789"/>
    </ligand>
</feature>
<proteinExistence type="inferred from homology"/>
<gene>
    <name evidence="1" type="primary">rsmH</name>
    <name type="synonym">mraW</name>
    <name type="ordered locus">MS1675</name>
</gene>
<name>RSMH_MANSM</name>
<keyword id="KW-0963">Cytoplasm</keyword>
<keyword id="KW-0489">Methyltransferase</keyword>
<keyword id="KW-0698">rRNA processing</keyword>
<keyword id="KW-0949">S-adenosyl-L-methionine</keyword>
<keyword id="KW-0808">Transferase</keyword>
<protein>
    <recommendedName>
        <fullName evidence="1">Ribosomal RNA small subunit methyltransferase H</fullName>
        <ecNumber evidence="1">2.1.1.199</ecNumber>
    </recommendedName>
    <alternativeName>
        <fullName evidence="1">16S rRNA m(4)C1402 methyltransferase</fullName>
    </alternativeName>
    <alternativeName>
        <fullName evidence="1">rRNA (cytosine-N(4)-)-methyltransferase RsmH</fullName>
    </alternativeName>
</protein>
<accession>Q65RX8</accession>
<dbReference type="EC" id="2.1.1.199" evidence="1"/>
<dbReference type="EMBL" id="AE016827">
    <property type="protein sequence ID" value="AAU38282.1"/>
    <property type="molecule type" value="Genomic_DNA"/>
</dbReference>
<dbReference type="RefSeq" id="WP_011200843.1">
    <property type="nucleotide sequence ID" value="NC_006300.1"/>
</dbReference>
<dbReference type="SMR" id="Q65RX8"/>
<dbReference type="STRING" id="221988.MS1675"/>
<dbReference type="KEGG" id="msu:MS1675"/>
<dbReference type="eggNOG" id="COG0275">
    <property type="taxonomic scope" value="Bacteria"/>
</dbReference>
<dbReference type="HOGENOM" id="CLU_038422_2_0_6"/>
<dbReference type="OrthoDB" id="9806637at2"/>
<dbReference type="Proteomes" id="UP000000607">
    <property type="component" value="Chromosome"/>
</dbReference>
<dbReference type="GO" id="GO:0005737">
    <property type="term" value="C:cytoplasm"/>
    <property type="evidence" value="ECO:0007669"/>
    <property type="project" value="UniProtKB-SubCell"/>
</dbReference>
<dbReference type="GO" id="GO:0071424">
    <property type="term" value="F:rRNA (cytosine-N4-)-methyltransferase activity"/>
    <property type="evidence" value="ECO:0007669"/>
    <property type="project" value="UniProtKB-UniRule"/>
</dbReference>
<dbReference type="GO" id="GO:0070475">
    <property type="term" value="P:rRNA base methylation"/>
    <property type="evidence" value="ECO:0007669"/>
    <property type="project" value="UniProtKB-UniRule"/>
</dbReference>
<dbReference type="FunFam" id="1.10.150.170:FF:000001">
    <property type="entry name" value="Ribosomal RNA small subunit methyltransferase H"/>
    <property type="match status" value="1"/>
</dbReference>
<dbReference type="Gene3D" id="1.10.150.170">
    <property type="entry name" value="Putative methyltransferase TM0872, insert domain"/>
    <property type="match status" value="1"/>
</dbReference>
<dbReference type="Gene3D" id="3.40.50.150">
    <property type="entry name" value="Vaccinia Virus protein VP39"/>
    <property type="match status" value="1"/>
</dbReference>
<dbReference type="HAMAP" id="MF_01007">
    <property type="entry name" value="16SrRNA_methyltr_H"/>
    <property type="match status" value="1"/>
</dbReference>
<dbReference type="InterPro" id="IPR002903">
    <property type="entry name" value="RsmH"/>
</dbReference>
<dbReference type="InterPro" id="IPR023397">
    <property type="entry name" value="SAM-dep_MeTrfase_MraW_recog"/>
</dbReference>
<dbReference type="InterPro" id="IPR029063">
    <property type="entry name" value="SAM-dependent_MTases_sf"/>
</dbReference>
<dbReference type="NCBIfam" id="TIGR00006">
    <property type="entry name" value="16S rRNA (cytosine(1402)-N(4))-methyltransferase RsmH"/>
    <property type="match status" value="1"/>
</dbReference>
<dbReference type="PANTHER" id="PTHR11265:SF0">
    <property type="entry name" value="12S RRNA N4-METHYLCYTIDINE METHYLTRANSFERASE"/>
    <property type="match status" value="1"/>
</dbReference>
<dbReference type="PANTHER" id="PTHR11265">
    <property type="entry name" value="S-ADENOSYL-METHYLTRANSFERASE MRAW"/>
    <property type="match status" value="1"/>
</dbReference>
<dbReference type="Pfam" id="PF01795">
    <property type="entry name" value="Methyltransf_5"/>
    <property type="match status" value="1"/>
</dbReference>
<dbReference type="PIRSF" id="PIRSF004486">
    <property type="entry name" value="MraW"/>
    <property type="match status" value="1"/>
</dbReference>
<dbReference type="SUPFAM" id="SSF81799">
    <property type="entry name" value="Putative methyltransferase TM0872, insert domain"/>
    <property type="match status" value="1"/>
</dbReference>
<dbReference type="SUPFAM" id="SSF53335">
    <property type="entry name" value="S-adenosyl-L-methionine-dependent methyltransferases"/>
    <property type="match status" value="1"/>
</dbReference>
<sequence length="322" mass="35890">MSEQNTFSSPEHITVLLHEAVDGLALKDKGIYIDGTFGRGGHSRLILSKLTENGRLIAIDRDPRAIAAAEEIQDSRFHIEHNSFSAIPYICEKLGLVGKIDGILLDLGVSSPQLDDAERGFSFMKDGPLDMRMDTSKGLSAAQWLQQVTEEDLAWVLKTFGEERFAKRIAHAIVNYNKSAVQNGTEPLTRTLPLAELIAQAVPFKDKHKHPATRSFQAIRIFINSELDELESVLHSALTVLAPEGRLSVISFHSLEDRMVKHFMRKQSKGESIPKGLPLREDQINRNRTLKVIGKAIQPKESEVFANPRSRSAVLRVAERIG</sequence>
<comment type="function">
    <text evidence="1">Specifically methylates the N4 position of cytidine in position 1402 (C1402) of 16S rRNA.</text>
</comment>
<comment type="catalytic activity">
    <reaction evidence="1">
        <text>cytidine(1402) in 16S rRNA + S-adenosyl-L-methionine = N(4)-methylcytidine(1402) in 16S rRNA + S-adenosyl-L-homocysteine + H(+)</text>
        <dbReference type="Rhea" id="RHEA:42928"/>
        <dbReference type="Rhea" id="RHEA-COMP:10286"/>
        <dbReference type="Rhea" id="RHEA-COMP:10287"/>
        <dbReference type="ChEBI" id="CHEBI:15378"/>
        <dbReference type="ChEBI" id="CHEBI:57856"/>
        <dbReference type="ChEBI" id="CHEBI:59789"/>
        <dbReference type="ChEBI" id="CHEBI:74506"/>
        <dbReference type="ChEBI" id="CHEBI:82748"/>
        <dbReference type="EC" id="2.1.1.199"/>
    </reaction>
</comment>
<comment type="subcellular location">
    <subcellularLocation>
        <location evidence="1">Cytoplasm</location>
    </subcellularLocation>
</comment>
<comment type="similarity">
    <text evidence="1">Belongs to the methyltransferase superfamily. RsmH family.</text>
</comment>
<reference key="1">
    <citation type="journal article" date="2004" name="Nat. Biotechnol.">
        <title>The genome sequence of the capnophilic rumen bacterium Mannheimia succiniciproducens.</title>
        <authorList>
            <person name="Hong S.H."/>
            <person name="Kim J.S."/>
            <person name="Lee S.Y."/>
            <person name="In Y.H."/>
            <person name="Choi S.S."/>
            <person name="Rih J.-K."/>
            <person name="Kim C.H."/>
            <person name="Jeong H."/>
            <person name="Hur C.G."/>
            <person name="Kim J.J."/>
        </authorList>
    </citation>
    <scope>NUCLEOTIDE SEQUENCE [LARGE SCALE GENOMIC DNA]</scope>
    <source>
        <strain>KCTC 0769BP / MBEL55E</strain>
    </source>
</reference>
<evidence type="ECO:0000255" key="1">
    <source>
        <dbReference type="HAMAP-Rule" id="MF_01007"/>
    </source>
</evidence>